<comment type="function">
    <molecule>Ghrelin</molecule>
    <text evidence="1">Ghrelin is the ligand for growth hormone secretagogue receptor type 1 (GHSR). Induces the release of growth hormone from the pituitary. Has an appetite-stimulating effect, induces adiposity and stimulates gastric acid secretion. Involved in growth regulation (By similarity).</text>
</comment>
<comment type="function">
    <molecule>Obestatin</molecule>
    <text evidence="1">Obestatin may be the ligand for GPR39. May have an appetite-reducing effect resulting in decreased food intake. May reduce gastric emptying activity and jejunal motility (By similarity).</text>
</comment>
<comment type="subcellular location">
    <subcellularLocation>
        <location evidence="1">Secreted</location>
    </subcellularLocation>
</comment>
<comment type="alternative products">
    <event type="alternative splicing"/>
    <isoform>
        <id>Q9GKY5-1</id>
        <name>1</name>
        <name>Ghrelin</name>
        <sequence type="displayed"/>
    </isoform>
    <isoform>
        <id>Q9GKY5-2</id>
        <name>2</name>
        <name>des-Gln14-ghrelin</name>
        <sequence type="described" ref="VSP_003247"/>
    </isoform>
</comment>
<comment type="PTM">
    <text evidence="1 2">O-octanoylated by GOAT/MBOAT4 (By similarity). O-octanoylation is essential for ghrelin activity.</text>
</comment>
<comment type="PTM">
    <text evidence="1">Amidation of Leu-99 is essential for obestatin activity.</text>
</comment>
<comment type="similarity">
    <text evidence="6">Belongs to the motilin family.</text>
</comment>
<comment type="online information" name="Protein Spotlight">
    <link uri="https://www.proteinspotlight.org/back_issues/066"/>
    <text>Gut feelings - Issue 66 of January 2006</text>
</comment>
<protein>
    <recommendedName>
        <fullName>Appetite-regulating hormone</fullName>
    </recommendedName>
    <alternativeName>
        <fullName>Growth hormone secretagogue</fullName>
    </alternativeName>
    <alternativeName>
        <fullName>Growth hormone-releasing peptide</fullName>
    </alternativeName>
    <alternativeName>
        <fullName>Motilin-related peptide</fullName>
    </alternativeName>
    <component>
        <recommendedName>
            <fullName>Ghrelin</fullName>
        </recommendedName>
    </component>
    <component>
        <recommendedName>
            <fullName>Obestatin</fullName>
        </recommendedName>
    </component>
</protein>
<dbReference type="EMBL" id="AB035703">
    <property type="protein sequence ID" value="BAB19048.1"/>
    <property type="molecule type" value="mRNA"/>
</dbReference>
<dbReference type="EMBL" id="AB035704">
    <property type="protein sequence ID" value="BAB19049.1"/>
    <property type="molecule type" value="mRNA"/>
</dbReference>
<dbReference type="EMBL" id="AF308930">
    <property type="protein sequence ID" value="AAK19243.1"/>
    <property type="molecule type" value="mRNA"/>
</dbReference>
<dbReference type="EMBL" id="AY028942">
    <property type="protein sequence ID" value="AAK30002.1"/>
    <property type="molecule type" value="mRNA"/>
</dbReference>
<dbReference type="EMBL" id="DQ355969">
    <property type="protein sequence ID" value="ABC94728.1"/>
    <property type="molecule type" value="mRNA"/>
</dbReference>
<dbReference type="EMBL" id="DQ663493">
    <property type="protein sequence ID" value="ABG23100.1"/>
    <property type="molecule type" value="Genomic_DNA"/>
</dbReference>
<dbReference type="RefSeq" id="NP_998972.1">
    <molecule id="Q9GKY5-1"/>
    <property type="nucleotide sequence ID" value="NM_213807.2"/>
</dbReference>
<dbReference type="RefSeq" id="XP_013837377.1">
    <property type="nucleotide sequence ID" value="XM_013981923.1"/>
</dbReference>
<dbReference type="SMR" id="Q9GKY5"/>
<dbReference type="FunCoup" id="Q9GKY5">
    <property type="interactions" value="381"/>
</dbReference>
<dbReference type="STRING" id="9823.ENSSSCP00000012327"/>
<dbReference type="PaxDb" id="9823-ENSSSCP00000012327"/>
<dbReference type="Ensembl" id="ENSSSCT00035110353.1">
    <molecule id="Q9GKY5-1"/>
    <property type="protein sequence ID" value="ENSSSCP00035048127.1"/>
    <property type="gene ID" value="ENSSSCG00035080494.1"/>
</dbReference>
<dbReference type="Ensembl" id="ENSSSCT00055014509.1">
    <molecule id="Q9GKY5-1"/>
    <property type="protein sequence ID" value="ENSSSCP00055011407.1"/>
    <property type="gene ID" value="ENSSSCG00055007434.1"/>
</dbReference>
<dbReference type="Ensembl" id="ENSSSCT00065066089.1">
    <molecule id="Q9GKY5-1"/>
    <property type="protein sequence ID" value="ENSSSCP00065028624.1"/>
    <property type="gene ID" value="ENSSSCG00065048307.1"/>
</dbReference>
<dbReference type="Ensembl" id="ENSSSCT00105065805">
    <molecule id="Q9GKY5-1"/>
    <property type="protein sequence ID" value="ENSSSCP00105046863"/>
    <property type="gene ID" value="ENSSSCG00105034471"/>
</dbReference>
<dbReference type="Ensembl" id="ENSSSCT00110060034">
    <molecule id="Q9GKY5-1"/>
    <property type="protein sequence ID" value="ENSSSCP00110041982"/>
    <property type="gene ID" value="ENSSSCG00110031407"/>
</dbReference>
<dbReference type="Ensembl" id="ENSSSCT00115039023">
    <molecule id="Q9GKY5-1"/>
    <property type="protein sequence ID" value="ENSSSCP00115036801"/>
    <property type="gene ID" value="ENSSSCG00115022039"/>
</dbReference>
<dbReference type="Ensembl" id="ENSSSCT00130024750">
    <molecule id="Q9GKY5-1"/>
    <property type="protein sequence ID" value="ENSSSCP00130024027"/>
    <property type="gene ID" value="ENSSSCG00130017767"/>
</dbReference>
<dbReference type="GeneID" id="396728"/>
<dbReference type="KEGG" id="ssc:396728"/>
<dbReference type="CTD" id="51738"/>
<dbReference type="eggNOG" id="ENOG502SFY3">
    <property type="taxonomic scope" value="Eukaryota"/>
</dbReference>
<dbReference type="InParanoid" id="Q9GKY5"/>
<dbReference type="OrthoDB" id="9896247at2759"/>
<dbReference type="Reactome" id="R-SSC-416476">
    <property type="pathway name" value="G alpha (q) signalling events"/>
</dbReference>
<dbReference type="Reactome" id="R-SSC-422085">
    <property type="pathway name" value="Synthesis, secretion, and deacylation of Ghrelin"/>
</dbReference>
<dbReference type="Proteomes" id="UP000008227">
    <property type="component" value="Unplaced"/>
</dbReference>
<dbReference type="Proteomes" id="UP000314985">
    <property type="component" value="Unplaced"/>
</dbReference>
<dbReference type="Proteomes" id="UP000694570">
    <property type="component" value="Unplaced"/>
</dbReference>
<dbReference type="Proteomes" id="UP000694571">
    <property type="component" value="Unplaced"/>
</dbReference>
<dbReference type="Proteomes" id="UP000694720">
    <property type="component" value="Unplaced"/>
</dbReference>
<dbReference type="Proteomes" id="UP000694722">
    <property type="component" value="Unplaced"/>
</dbReference>
<dbReference type="Proteomes" id="UP000694723">
    <property type="component" value="Unplaced"/>
</dbReference>
<dbReference type="Proteomes" id="UP000694724">
    <property type="component" value="Unplaced"/>
</dbReference>
<dbReference type="Proteomes" id="UP000694725">
    <property type="component" value="Unplaced"/>
</dbReference>
<dbReference type="Proteomes" id="UP000694726">
    <property type="component" value="Unplaced"/>
</dbReference>
<dbReference type="Proteomes" id="UP000694727">
    <property type="component" value="Unplaced"/>
</dbReference>
<dbReference type="Proteomes" id="UP000694728">
    <property type="component" value="Unplaced"/>
</dbReference>
<dbReference type="GO" id="GO:0030424">
    <property type="term" value="C:axon"/>
    <property type="evidence" value="ECO:0000250"/>
    <property type="project" value="UniProtKB"/>
</dbReference>
<dbReference type="GO" id="GO:0005576">
    <property type="term" value="C:extracellular region"/>
    <property type="evidence" value="ECO:0000250"/>
    <property type="project" value="UniProtKB"/>
</dbReference>
<dbReference type="GO" id="GO:0005615">
    <property type="term" value="C:extracellular space"/>
    <property type="evidence" value="ECO:0000314"/>
    <property type="project" value="UniProtKB"/>
</dbReference>
<dbReference type="GO" id="GO:0031768">
    <property type="term" value="F:ghrelin receptor binding"/>
    <property type="evidence" value="ECO:0000250"/>
    <property type="project" value="UniProtKB"/>
</dbReference>
<dbReference type="GO" id="GO:0016608">
    <property type="term" value="F:growth hormone-releasing hormone activity"/>
    <property type="evidence" value="ECO:0000250"/>
    <property type="project" value="UniProtKB"/>
</dbReference>
<dbReference type="GO" id="GO:0005179">
    <property type="term" value="F:hormone activity"/>
    <property type="evidence" value="ECO:0000250"/>
    <property type="project" value="UniProtKB"/>
</dbReference>
<dbReference type="GO" id="GO:0030296">
    <property type="term" value="F:protein tyrosine kinase activator activity"/>
    <property type="evidence" value="ECO:0000250"/>
    <property type="project" value="UniProtKB"/>
</dbReference>
<dbReference type="GO" id="GO:0008154">
    <property type="term" value="P:actin polymerization or depolymerization"/>
    <property type="evidence" value="ECO:0000250"/>
    <property type="project" value="UniProtKB"/>
</dbReference>
<dbReference type="GO" id="GO:0046697">
    <property type="term" value="P:decidualization"/>
    <property type="evidence" value="ECO:0000250"/>
    <property type="project" value="UniProtKB"/>
</dbReference>
<dbReference type="GO" id="GO:0016358">
    <property type="term" value="P:dendrite development"/>
    <property type="evidence" value="ECO:0000250"/>
    <property type="project" value="UniProtKB"/>
</dbReference>
<dbReference type="GO" id="GO:0001696">
    <property type="term" value="P:gastric acid secretion"/>
    <property type="evidence" value="ECO:0000318"/>
    <property type="project" value="GO_Central"/>
</dbReference>
<dbReference type="GO" id="GO:0043066">
    <property type="term" value="P:negative regulation of apoptotic process"/>
    <property type="evidence" value="ECO:0000250"/>
    <property type="project" value="UniProtKB"/>
</dbReference>
<dbReference type="GO" id="GO:0001937">
    <property type="term" value="P:negative regulation of endothelial cell proliferation"/>
    <property type="evidence" value="ECO:0000250"/>
    <property type="project" value="UniProtKB"/>
</dbReference>
<dbReference type="GO" id="GO:0050728">
    <property type="term" value="P:negative regulation of inflammatory response"/>
    <property type="evidence" value="ECO:0000250"/>
    <property type="project" value="UniProtKB"/>
</dbReference>
<dbReference type="GO" id="GO:0046676">
    <property type="term" value="P:negative regulation of insulin secretion"/>
    <property type="evidence" value="ECO:0000250"/>
    <property type="project" value="UniProtKB"/>
</dbReference>
<dbReference type="GO" id="GO:0032691">
    <property type="term" value="P:negative regulation of interleukin-1 beta production"/>
    <property type="evidence" value="ECO:0000250"/>
    <property type="project" value="UniProtKB"/>
</dbReference>
<dbReference type="GO" id="GO:0032715">
    <property type="term" value="P:negative regulation of interleukin-6 production"/>
    <property type="evidence" value="ECO:0000250"/>
    <property type="project" value="UniProtKB"/>
</dbReference>
<dbReference type="GO" id="GO:0032720">
    <property type="term" value="P:negative regulation of tumor necrosis factor production"/>
    <property type="evidence" value="ECO:0000250"/>
    <property type="project" value="UniProtKB"/>
</dbReference>
<dbReference type="GO" id="GO:0007204">
    <property type="term" value="P:positive regulation of cytosolic calcium ion concentration"/>
    <property type="evidence" value="ECO:0000250"/>
    <property type="project" value="UniProtKB"/>
</dbReference>
<dbReference type="GO" id="GO:0060124">
    <property type="term" value="P:positive regulation of growth hormone secretion"/>
    <property type="evidence" value="ECO:0000318"/>
    <property type="project" value="GO_Central"/>
</dbReference>
<dbReference type="GO" id="GO:0032024">
    <property type="term" value="P:positive regulation of insulin secretion"/>
    <property type="evidence" value="ECO:0000250"/>
    <property type="project" value="UniProtKB"/>
</dbReference>
<dbReference type="GO" id="GO:0043410">
    <property type="term" value="P:positive regulation of MAPK cascade"/>
    <property type="evidence" value="ECO:0000250"/>
    <property type="project" value="UniProtKB"/>
</dbReference>
<dbReference type="GO" id="GO:0032097">
    <property type="term" value="P:positive regulation of response to food"/>
    <property type="evidence" value="ECO:0000250"/>
    <property type="project" value="UniProtKB"/>
</dbReference>
<dbReference type="GO" id="GO:0051965">
    <property type="term" value="P:positive regulation of synapse assembly"/>
    <property type="evidence" value="ECO:0000250"/>
    <property type="project" value="UniProtKB"/>
</dbReference>
<dbReference type="GO" id="GO:0042127">
    <property type="term" value="P:regulation of cell population proliferation"/>
    <property type="evidence" value="ECO:0000250"/>
    <property type="project" value="UniProtKB"/>
</dbReference>
<dbReference type="GO" id="GO:0032095">
    <property type="term" value="P:regulation of response to food"/>
    <property type="evidence" value="ECO:0000250"/>
    <property type="project" value="UniProtKB"/>
</dbReference>
<dbReference type="GO" id="GO:0043627">
    <property type="term" value="P:response to estrogen"/>
    <property type="evidence" value="ECO:0000250"/>
    <property type="project" value="UniProtKB"/>
</dbReference>
<dbReference type="GO" id="GO:0009725">
    <property type="term" value="P:response to hormone"/>
    <property type="evidence" value="ECO:0000250"/>
    <property type="project" value="UniProtKB"/>
</dbReference>
<dbReference type="InterPro" id="IPR006737">
    <property type="entry name" value="Motilin_assoc"/>
</dbReference>
<dbReference type="InterPro" id="IPR006738">
    <property type="entry name" value="Motilin_ghrelin"/>
</dbReference>
<dbReference type="InterPro" id="IPR005441">
    <property type="entry name" value="Preproghrelin"/>
</dbReference>
<dbReference type="PANTHER" id="PTHR14122:SF1">
    <property type="entry name" value="APPETITE-REGULATING HORMONE"/>
    <property type="match status" value="1"/>
</dbReference>
<dbReference type="PANTHER" id="PTHR14122">
    <property type="entry name" value="GHRELIN PRECURSOR"/>
    <property type="match status" value="1"/>
</dbReference>
<dbReference type="Pfam" id="PF04643">
    <property type="entry name" value="Motilin_assoc"/>
    <property type="match status" value="1"/>
</dbReference>
<dbReference type="Pfam" id="PF04644">
    <property type="entry name" value="Motilin_ghrelin"/>
    <property type="match status" value="1"/>
</dbReference>
<dbReference type="PRINTS" id="PR01624">
    <property type="entry name" value="GHRELIN"/>
</dbReference>
<feature type="signal peptide" evidence="1">
    <location>
        <begin position="1"/>
        <end position="24"/>
    </location>
</feature>
<feature type="peptide" id="PRO_0000019207" description="Ghrelin">
    <location>
        <begin position="25"/>
        <end position="52"/>
    </location>
</feature>
<feature type="propeptide" id="PRO_0000019208" description="Removed in mature form" evidence="1">
    <location>
        <begin position="53"/>
        <end position="76"/>
    </location>
</feature>
<feature type="peptide" id="PRO_0000045144" description="Obestatin" evidence="1">
    <location>
        <begin position="77"/>
        <end position="99"/>
    </location>
</feature>
<feature type="propeptide" id="PRO_0000045145" description="Removed in mature form" evidence="1">
    <location>
        <begin position="100"/>
        <end position="118"/>
    </location>
</feature>
<feature type="region of interest" description="Disordered" evidence="3">
    <location>
        <begin position="29"/>
        <end position="50"/>
    </location>
</feature>
<feature type="compositionally biased region" description="Basic and acidic residues" evidence="3">
    <location>
        <begin position="32"/>
        <end position="44"/>
    </location>
</feature>
<feature type="modified residue" description="Leucine amide" evidence="1">
    <location>
        <position position="99"/>
    </location>
</feature>
<feature type="lipid moiety-binding region" description="O-decanoyl serine; alternate" evidence="2">
    <location>
        <position position="27"/>
    </location>
</feature>
<feature type="lipid moiety-binding region" description="O-hexanoyl serine; alternate" evidence="2">
    <location>
        <position position="27"/>
    </location>
</feature>
<feature type="lipid moiety-binding region" description="O-octanoyl serine; alternate" evidence="2">
    <location>
        <position position="27"/>
    </location>
</feature>
<feature type="splice variant" id="VSP_003247" description="In isoform 2." evidence="4 5">
    <location>
        <position position="38"/>
    </location>
</feature>
<feature type="sequence conflict" description="In Ref. 2; AAK30002." evidence="6" ref="2">
    <original>L</original>
    <variation>P</variation>
    <location>
        <position position="17"/>
    </location>
</feature>
<feature type="sequence conflict" description="In Ref. 2; AAK30002." evidence="6" ref="2">
    <original>K</original>
    <variation>E</variation>
    <location>
        <position position="72"/>
    </location>
</feature>
<feature type="sequence conflict" description="In Ref. 3; ABC94728." evidence="6" ref="3">
    <original>T</original>
    <variation>N</variation>
    <location>
        <position position="112"/>
    </location>
</feature>
<keyword id="KW-0025">Alternative splicing</keyword>
<keyword id="KW-0027">Amidation</keyword>
<keyword id="KW-0372">Hormone</keyword>
<keyword id="KW-0449">Lipoprotein</keyword>
<keyword id="KW-1185">Reference proteome</keyword>
<keyword id="KW-0964">Secreted</keyword>
<keyword id="KW-0732">Signal</keyword>
<proteinExistence type="inferred from homology"/>
<accession>Q9GKY5</accession>
<accession>A5X8W4</accession>
<accession>Q2I0G0</accession>
<accession>Q9BDG8</accession>
<accession>Q9GKY4</accession>
<organism>
    <name type="scientific">Sus scrofa</name>
    <name type="common">Pig</name>
    <dbReference type="NCBI Taxonomy" id="9823"/>
    <lineage>
        <taxon>Eukaryota</taxon>
        <taxon>Metazoa</taxon>
        <taxon>Chordata</taxon>
        <taxon>Craniata</taxon>
        <taxon>Vertebrata</taxon>
        <taxon>Euteleostomi</taxon>
        <taxon>Mammalia</taxon>
        <taxon>Eutheria</taxon>
        <taxon>Laurasiatheria</taxon>
        <taxon>Artiodactyla</taxon>
        <taxon>Suina</taxon>
        <taxon>Suidae</taxon>
        <taxon>Sus</taxon>
    </lineage>
</organism>
<sequence length="118" mass="12786">MPSTGTICSLLLLSVLLMADLAMAGSSFLSPEHQKVQQRKESKKPAAKLKPRALEGWLGPEDSGEVEGTEDKLEIRFNAPCDVGIKLSGAQSDQHGQPLGKFLQDILWEEVTEAPADK</sequence>
<name>GHRL_PIG</name>
<evidence type="ECO:0000250" key="1"/>
<evidence type="ECO:0000250" key="2">
    <source>
        <dbReference type="UniProtKB" id="Q9EQX0"/>
    </source>
</evidence>
<evidence type="ECO:0000256" key="3">
    <source>
        <dbReference type="SAM" id="MobiDB-lite"/>
    </source>
</evidence>
<evidence type="ECO:0000303" key="4">
    <source ref="1"/>
</evidence>
<evidence type="ECO:0000303" key="5">
    <source ref="2"/>
</evidence>
<evidence type="ECO:0000305" key="6"/>
<reference key="1">
    <citation type="submission" date="1999-12" db="EMBL/GenBank/DDBJ databases">
        <authorList>
            <person name="Kojima M."/>
        </authorList>
    </citation>
    <scope>NUCLEOTIDE SEQUENCE [MRNA] (ISOFORMS 1 AND 2)</scope>
</reference>
<reference key="2">
    <citation type="submission" date="2001-03" db="EMBL/GenBank/DDBJ databases">
        <authorList>
            <person name="Rousselle J."/>
            <person name="Lacroix D."/>
            <person name="Dubreuil P."/>
        </authorList>
    </citation>
    <scope>NUCLEOTIDE SEQUENCE [MRNA] (ISOFORMS 1 AND 2)</scope>
    <source>
        <tissue>Stomach</tissue>
    </source>
</reference>
<reference key="3">
    <citation type="submission" date="2006-01" db="EMBL/GenBank/DDBJ databases">
        <authorList>
            <person name="Ying M."/>
            <person name="Yang Z."/>
        </authorList>
    </citation>
    <scope>NUCLEOTIDE SEQUENCE [MRNA] (ISOFORM 1)</scope>
</reference>
<reference key="4">
    <citation type="submission" date="2006-05" db="EMBL/GenBank/DDBJ databases">
        <title>Sequencing and chromosome mapping of pig ghrelin and motilin genes.</title>
        <authorList>
            <person name="Ying M."/>
            <person name="Yang Z."/>
            <person name="Yang W."/>
        </authorList>
    </citation>
    <scope>NUCLEOTIDE SEQUENCE [GENOMIC DNA]</scope>
</reference>
<gene>
    <name type="primary">GHRL</name>
</gene>